<proteinExistence type="inferred from homology"/>
<organism>
    <name type="scientific">Methanocaldococcus jannaschii (strain ATCC 43067 / DSM 2661 / JAL-1 / JCM 10045 / NBRC 100440)</name>
    <name type="common">Methanococcus jannaschii</name>
    <dbReference type="NCBI Taxonomy" id="243232"/>
    <lineage>
        <taxon>Archaea</taxon>
        <taxon>Methanobacteriati</taxon>
        <taxon>Methanobacteriota</taxon>
        <taxon>Methanomada group</taxon>
        <taxon>Methanococci</taxon>
        <taxon>Methanococcales</taxon>
        <taxon>Methanocaldococcaceae</taxon>
        <taxon>Methanocaldococcus</taxon>
    </lineage>
</organism>
<gene>
    <name evidence="1" type="primary">fbp</name>
    <name type="ordered locus">MJ0299</name>
</gene>
<accession>Q57747</accession>
<keyword id="KW-0119">Carbohydrate metabolism</keyword>
<keyword id="KW-0312">Gluconeogenesis</keyword>
<keyword id="KW-0378">Hydrolase</keyword>
<keyword id="KW-0456">Lyase</keyword>
<keyword id="KW-0460">Magnesium</keyword>
<keyword id="KW-0479">Metal-binding</keyword>
<keyword id="KW-1185">Reference proteome</keyword>
<keyword id="KW-0704">Schiff base</keyword>
<feature type="chain" id="PRO_0000106782" description="Fructose-1,6-bisphosphate aldolase/phosphatase">
    <location>
        <begin position="1"/>
        <end position="389"/>
    </location>
</feature>
<feature type="active site" description="Proton acceptor; for FBP phosphatase activity" evidence="1">
    <location>
        <position position="17"/>
    </location>
</feature>
<feature type="active site" description="Proton donor/acceptor; for FBP aldolase activity" evidence="1">
    <location>
        <position position="233"/>
    </location>
</feature>
<feature type="active site" description="Schiff-base intermediate with DHAP; for FBP aldolase activity" evidence="1">
    <location>
        <position position="236"/>
    </location>
</feature>
<feature type="binding site" evidence="1">
    <location>
        <position position="17"/>
    </location>
    <ligand>
        <name>Mg(2+)</name>
        <dbReference type="ChEBI" id="CHEBI:18420"/>
        <label>1</label>
    </ligand>
</feature>
<feature type="binding site" description="in other chain" evidence="1">
    <location>
        <position position="24"/>
    </location>
    <ligand>
        <name>beta-D-fructose 1,6-bisphosphate</name>
        <dbReference type="ChEBI" id="CHEBI:32966"/>
        <note>ligand shared between dimeric partners</note>
    </ligand>
</feature>
<feature type="binding site" evidence="1">
    <location>
        <position position="24"/>
    </location>
    <ligand>
        <name>dihydroxyacetone phosphate</name>
        <dbReference type="ChEBI" id="CHEBI:57642"/>
    </ligand>
</feature>
<feature type="binding site" evidence="1">
    <location>
        <position position="24"/>
    </location>
    <ligand>
        <name>Mg(2+)</name>
        <dbReference type="ChEBI" id="CHEBI:18420"/>
        <label>1</label>
    </ligand>
</feature>
<feature type="binding site" evidence="1">
    <location>
        <position position="57"/>
    </location>
    <ligand>
        <name>Mg(2+)</name>
        <dbReference type="ChEBI" id="CHEBI:18420"/>
        <label>1</label>
    </ligand>
</feature>
<feature type="binding site" evidence="1">
    <location>
        <position position="57"/>
    </location>
    <ligand>
        <name>Mg(2+)</name>
        <dbReference type="ChEBI" id="CHEBI:18420"/>
        <label>2</label>
    </ligand>
</feature>
<feature type="binding site" evidence="1">
    <location>
        <position position="58"/>
    </location>
    <ligand>
        <name>Mg(2+)</name>
        <dbReference type="ChEBI" id="CHEBI:18420"/>
        <label>2</label>
    </ligand>
</feature>
<feature type="binding site" description="in other chain" evidence="1">
    <location>
        <position position="95"/>
    </location>
    <ligand>
        <name>beta-D-fructose 1,6-bisphosphate</name>
        <dbReference type="ChEBI" id="CHEBI:32966"/>
        <note>ligand shared between dimeric partners</note>
    </ligand>
</feature>
<feature type="binding site" evidence="1">
    <location>
        <position position="99"/>
    </location>
    <ligand>
        <name>Mg(2+)</name>
        <dbReference type="ChEBI" id="CHEBI:18420"/>
        <label>1</label>
    </ligand>
</feature>
<feature type="binding site" description="in other chain" evidence="1">
    <location>
        <begin position="108"/>
        <end position="109"/>
    </location>
    <ligand>
        <name>beta-D-fructose 1,6-bisphosphate</name>
        <dbReference type="ChEBI" id="CHEBI:32966"/>
        <note>ligand shared between dimeric partners</note>
    </ligand>
</feature>
<feature type="binding site" evidence="1">
    <location>
        <position position="136"/>
    </location>
    <ligand>
        <name>Mg(2+)</name>
        <dbReference type="ChEBI" id="CHEBI:18420"/>
        <label>2</label>
    </ligand>
</feature>
<feature type="binding site" description="in other chain" evidence="1">
    <location>
        <position position="137"/>
    </location>
    <ligand>
        <name>beta-D-fructose 1,6-bisphosphate</name>
        <dbReference type="ChEBI" id="CHEBI:32966"/>
        <note>ligand shared between dimeric partners</note>
    </ligand>
</feature>
<feature type="binding site" evidence="1">
    <location>
        <position position="137"/>
    </location>
    <ligand>
        <name>dihydroxyacetone phosphate</name>
        <dbReference type="ChEBI" id="CHEBI:57642"/>
    </ligand>
</feature>
<feature type="binding site" evidence="1">
    <location>
        <position position="236"/>
    </location>
    <ligand>
        <name>Mg(2+)</name>
        <dbReference type="ChEBI" id="CHEBI:18420"/>
        <label>3</label>
    </ligand>
</feature>
<feature type="binding site" evidence="1">
    <location>
        <position position="237"/>
    </location>
    <ligand>
        <name>Mg(2+)</name>
        <dbReference type="ChEBI" id="CHEBI:18420"/>
        <label>3</label>
    </ligand>
</feature>
<feature type="binding site" evidence="1">
    <location>
        <position position="237"/>
    </location>
    <ligand>
        <name>Mg(2+)</name>
        <dbReference type="ChEBI" id="CHEBI:18420"/>
        <label>4</label>
    </ligand>
</feature>
<feature type="binding site" evidence="1">
    <location>
        <position position="238"/>
    </location>
    <ligand>
        <name>Mg(2+)</name>
        <dbReference type="ChEBI" id="CHEBI:18420"/>
        <label>2</label>
    </ligand>
</feature>
<feature type="binding site" evidence="1">
    <location>
        <position position="238"/>
    </location>
    <ligand>
        <name>Mg(2+)</name>
        <dbReference type="ChEBI" id="CHEBI:18420"/>
        <label>3</label>
    </ligand>
</feature>
<feature type="binding site" evidence="1">
    <location>
        <begin position="246"/>
        <end position="247"/>
    </location>
    <ligand>
        <name>beta-D-fructose 1,6-bisphosphate</name>
        <dbReference type="ChEBI" id="CHEBI:32966"/>
        <note>ligand shared between dimeric partners</note>
    </ligand>
</feature>
<feature type="binding site" description="in other chain" evidence="1">
    <location>
        <position position="270"/>
    </location>
    <ligand>
        <name>beta-D-fructose 1,6-bisphosphate</name>
        <dbReference type="ChEBI" id="CHEBI:32966"/>
        <note>ligand shared between dimeric partners</note>
    </ligand>
</feature>
<feature type="binding site" evidence="1">
    <location>
        <position position="270"/>
    </location>
    <ligand>
        <name>dihydroxyacetone phosphate</name>
        <dbReference type="ChEBI" id="CHEBI:57642"/>
    </ligand>
</feature>
<feature type="binding site" description="in other chain" evidence="1">
    <location>
        <position position="291"/>
    </location>
    <ligand>
        <name>beta-D-fructose 1,6-bisphosphate</name>
        <dbReference type="ChEBI" id="CHEBI:32966"/>
        <note>ligand shared between dimeric partners</note>
    </ligand>
</feature>
<feature type="binding site" evidence="1">
    <location>
        <position position="291"/>
    </location>
    <ligand>
        <name>dihydroxyacetone phosphate</name>
        <dbReference type="ChEBI" id="CHEBI:57642"/>
    </ligand>
</feature>
<feature type="binding site" description="in other chain" evidence="1">
    <location>
        <position position="352"/>
    </location>
    <ligand>
        <name>beta-D-fructose 1,6-bisphosphate</name>
        <dbReference type="ChEBI" id="CHEBI:32966"/>
        <note>ligand shared between dimeric partners</note>
    </ligand>
</feature>
<sequence length="389" mass="43246">MSRMENNKVTISVIKADVGGLCGHTLAPDELLEACEAVLEEAVDEIILDYYVTRCGDDIDLIMSHKLGCDNEKVHGLAWRAFEEATKVAKELKLYGAGQDLLADSFSGNVRGMGPGCAEMEFVERKSEPIVVFCCDKTDPTAFNYPLFKMFADPFNTAGLVFDPSMISGFKFEVHDVVGHKKVFLDTPEEMYMLLALIGDYEKYAIKRVYRRRDNEIAAVVSTEKLNYIAGEYVGKDDPVAIVRAQSGFPAVGEVLEPFANPHFVPGWMRGSHWGPLMPVGEEDATPTRFDGPARIIALGFQVCDGMLIGPNDLFADKGFDKAREKALEMADIIRRMGPFQPHRLPATMMEYTTVPKVLEALEDRFIPLEGLELIEEGGITRKDRGDVE</sequence>
<dbReference type="EC" id="3.1.3.11" evidence="1"/>
<dbReference type="EC" id="4.1.2.13" evidence="1"/>
<dbReference type="EMBL" id="L77117">
    <property type="protein sequence ID" value="AAB98286.1"/>
    <property type="molecule type" value="Genomic_DNA"/>
</dbReference>
<dbReference type="PIR" id="D64337">
    <property type="entry name" value="D64337"/>
</dbReference>
<dbReference type="SMR" id="Q57747"/>
<dbReference type="FunCoup" id="Q57747">
    <property type="interactions" value="161"/>
</dbReference>
<dbReference type="STRING" id="243232.MJ_0299"/>
<dbReference type="PaxDb" id="243232-MJ_0299"/>
<dbReference type="EnsemblBacteria" id="AAB98286">
    <property type="protein sequence ID" value="AAB98286"/>
    <property type="gene ID" value="MJ_0299"/>
</dbReference>
<dbReference type="KEGG" id="mja:MJ_0299"/>
<dbReference type="eggNOG" id="arCOG04180">
    <property type="taxonomic scope" value="Archaea"/>
</dbReference>
<dbReference type="HOGENOM" id="CLU_041630_0_0_2"/>
<dbReference type="InParanoid" id="Q57747"/>
<dbReference type="PhylomeDB" id="Q57747"/>
<dbReference type="UniPathway" id="UPA00138"/>
<dbReference type="Proteomes" id="UP000000805">
    <property type="component" value="Chromosome"/>
</dbReference>
<dbReference type="GO" id="GO:0042132">
    <property type="term" value="F:fructose 1,6-bisphosphate 1-phosphatase activity"/>
    <property type="evidence" value="ECO:0007669"/>
    <property type="project" value="UniProtKB-UniRule"/>
</dbReference>
<dbReference type="GO" id="GO:0004332">
    <property type="term" value="F:fructose-bisphosphate aldolase activity"/>
    <property type="evidence" value="ECO:0007669"/>
    <property type="project" value="UniProtKB-UniRule"/>
</dbReference>
<dbReference type="GO" id="GO:0000287">
    <property type="term" value="F:magnesium ion binding"/>
    <property type="evidence" value="ECO:0007669"/>
    <property type="project" value="UniProtKB-UniRule"/>
</dbReference>
<dbReference type="GO" id="GO:0006094">
    <property type="term" value="P:gluconeogenesis"/>
    <property type="evidence" value="ECO:0007669"/>
    <property type="project" value="UniProtKB-UniRule"/>
</dbReference>
<dbReference type="HAMAP" id="MF_02067">
    <property type="entry name" value="FBP_aldolase_phosphatase"/>
    <property type="match status" value="1"/>
</dbReference>
<dbReference type="InterPro" id="IPR002803">
    <property type="entry name" value="FBPase_V"/>
</dbReference>
<dbReference type="InterPro" id="IPR036076">
    <property type="entry name" value="FBPase_V_sf"/>
</dbReference>
<dbReference type="NCBIfam" id="NF041126">
    <property type="entry name" value="FBP_aldo_phos"/>
    <property type="match status" value="1"/>
</dbReference>
<dbReference type="PANTHER" id="PTHR38341">
    <property type="entry name" value="FRUCTOSE-1,6-BISPHOSPHATE ALDOLASE/PHOSPHATASE"/>
    <property type="match status" value="1"/>
</dbReference>
<dbReference type="PANTHER" id="PTHR38341:SF1">
    <property type="entry name" value="FRUCTOSE-1,6-BISPHOSPHATE ALDOLASE_PHOSPHATASE"/>
    <property type="match status" value="1"/>
</dbReference>
<dbReference type="Pfam" id="PF01950">
    <property type="entry name" value="FBPase_3"/>
    <property type="match status" value="1"/>
</dbReference>
<dbReference type="PIRSF" id="PIRSF015647">
    <property type="entry name" value="FBPtase_archl"/>
    <property type="match status" value="1"/>
</dbReference>
<dbReference type="SUPFAM" id="SSF111249">
    <property type="entry name" value="Sulfolobus fructose-1,6-bisphosphatase-like"/>
    <property type="match status" value="1"/>
</dbReference>
<reference key="1">
    <citation type="journal article" date="1996" name="Science">
        <title>Complete genome sequence of the methanogenic archaeon, Methanococcus jannaschii.</title>
        <authorList>
            <person name="Bult C.J."/>
            <person name="White O."/>
            <person name="Olsen G.J."/>
            <person name="Zhou L."/>
            <person name="Fleischmann R.D."/>
            <person name="Sutton G.G."/>
            <person name="Blake J.A."/>
            <person name="FitzGerald L.M."/>
            <person name="Clayton R.A."/>
            <person name="Gocayne J.D."/>
            <person name="Kerlavage A.R."/>
            <person name="Dougherty B.A."/>
            <person name="Tomb J.-F."/>
            <person name="Adams M.D."/>
            <person name="Reich C.I."/>
            <person name="Overbeek R."/>
            <person name="Kirkness E.F."/>
            <person name="Weinstock K.G."/>
            <person name="Merrick J.M."/>
            <person name="Glodek A."/>
            <person name="Scott J.L."/>
            <person name="Geoghagen N.S.M."/>
            <person name="Weidman J.F."/>
            <person name="Fuhrmann J.L."/>
            <person name="Nguyen D."/>
            <person name="Utterback T.R."/>
            <person name="Kelley J.M."/>
            <person name="Peterson J.D."/>
            <person name="Sadow P.W."/>
            <person name="Hanna M.C."/>
            <person name="Cotton M.D."/>
            <person name="Roberts K.M."/>
            <person name="Hurst M.A."/>
            <person name="Kaine B.P."/>
            <person name="Borodovsky M."/>
            <person name="Klenk H.-P."/>
            <person name="Fraser C.M."/>
            <person name="Smith H.O."/>
            <person name="Woese C.R."/>
            <person name="Venter J.C."/>
        </authorList>
    </citation>
    <scope>NUCLEOTIDE SEQUENCE [LARGE SCALE GENOMIC DNA]</scope>
    <source>
        <strain>ATCC 43067 / DSM 2661 / JAL-1 / JCM 10045 / NBRC 100440</strain>
    </source>
</reference>
<name>FBPAP_METJA</name>
<comment type="function">
    <text evidence="1">Catalyzes two subsequent steps in gluconeogenesis: the aldol condensation of dihydroxyacetone phosphate (DHAP) and glyceraldehyde-3-phosphate (GA3P) to fructose-1,6-bisphosphate (FBP), and the dephosphorylation of FBP to fructose-6-phosphate (F6P).</text>
</comment>
<comment type="catalytic activity">
    <reaction evidence="1">
        <text>beta-D-fructose 1,6-bisphosphate + H2O = beta-D-fructose 6-phosphate + phosphate</text>
        <dbReference type="Rhea" id="RHEA:11064"/>
        <dbReference type="ChEBI" id="CHEBI:15377"/>
        <dbReference type="ChEBI" id="CHEBI:32966"/>
        <dbReference type="ChEBI" id="CHEBI:43474"/>
        <dbReference type="ChEBI" id="CHEBI:57634"/>
        <dbReference type="EC" id="3.1.3.11"/>
    </reaction>
</comment>
<comment type="catalytic activity">
    <reaction evidence="1">
        <text>beta-D-fructose 1,6-bisphosphate = D-glyceraldehyde 3-phosphate + dihydroxyacetone phosphate</text>
        <dbReference type="Rhea" id="RHEA:14729"/>
        <dbReference type="ChEBI" id="CHEBI:32966"/>
        <dbReference type="ChEBI" id="CHEBI:57642"/>
        <dbReference type="ChEBI" id="CHEBI:59776"/>
        <dbReference type="EC" id="4.1.2.13"/>
    </reaction>
</comment>
<comment type="cofactor">
    <cofactor evidence="1">
        <name>Mg(2+)</name>
        <dbReference type="ChEBI" id="CHEBI:18420"/>
    </cofactor>
</comment>
<comment type="pathway">
    <text evidence="1">Carbohydrate biosynthesis; gluconeogenesis.</text>
</comment>
<comment type="subunit">
    <text evidence="1">Homooctamer; dimer of tetramers.</text>
</comment>
<comment type="domain">
    <text evidence="1">Consists of a single catalytic domain, but remodels its active-site architecture via a large structural change to exhibit dual activities.</text>
</comment>
<comment type="similarity">
    <text evidence="1">Belongs to the FBP aldolase/phosphatase family.</text>
</comment>
<protein>
    <recommendedName>
        <fullName evidence="1">Fructose-1,6-bisphosphate aldolase/phosphatase</fullName>
        <shortName evidence="1">FBP A/P</shortName>
        <shortName evidence="1">FBP aldolase/phosphatase</shortName>
        <ecNumber evidence="1">3.1.3.11</ecNumber>
        <ecNumber evidence="1">4.1.2.13</ecNumber>
    </recommendedName>
</protein>
<evidence type="ECO:0000255" key="1">
    <source>
        <dbReference type="HAMAP-Rule" id="MF_02067"/>
    </source>
</evidence>